<gene>
    <name evidence="1" type="primary">murG</name>
    <name type="ordered locus">PMN2A_1564</name>
</gene>
<feature type="chain" id="PRO_0000225078" description="UDP-N-acetylglucosamine--N-acetylmuramyl-(pentapeptide) pyrophosphoryl-undecaprenol N-acetylglucosamine transferase">
    <location>
        <begin position="1"/>
        <end position="352"/>
    </location>
</feature>
<feature type="binding site" evidence="1">
    <location>
        <begin position="11"/>
        <end position="13"/>
    </location>
    <ligand>
        <name>UDP-N-acetyl-alpha-D-glucosamine</name>
        <dbReference type="ChEBI" id="CHEBI:57705"/>
    </ligand>
</feature>
<feature type="binding site" evidence="1">
    <location>
        <position position="120"/>
    </location>
    <ligand>
        <name>UDP-N-acetyl-alpha-D-glucosamine</name>
        <dbReference type="ChEBI" id="CHEBI:57705"/>
    </ligand>
</feature>
<feature type="binding site" evidence="1">
    <location>
        <position position="161"/>
    </location>
    <ligand>
        <name>UDP-N-acetyl-alpha-D-glucosamine</name>
        <dbReference type="ChEBI" id="CHEBI:57705"/>
    </ligand>
</feature>
<feature type="binding site" evidence="1">
    <location>
        <position position="188"/>
    </location>
    <ligand>
        <name>UDP-N-acetyl-alpha-D-glucosamine</name>
        <dbReference type="ChEBI" id="CHEBI:57705"/>
    </ligand>
</feature>
<feature type="binding site" evidence="1">
    <location>
        <position position="286"/>
    </location>
    <ligand>
        <name>UDP-N-acetyl-alpha-D-glucosamine</name>
        <dbReference type="ChEBI" id="CHEBI:57705"/>
    </ligand>
</feature>
<keyword id="KW-0131">Cell cycle</keyword>
<keyword id="KW-0132">Cell division</keyword>
<keyword id="KW-0997">Cell inner membrane</keyword>
<keyword id="KW-1003">Cell membrane</keyword>
<keyword id="KW-0133">Cell shape</keyword>
<keyword id="KW-0961">Cell wall biogenesis/degradation</keyword>
<keyword id="KW-0328">Glycosyltransferase</keyword>
<keyword id="KW-0472">Membrane</keyword>
<keyword id="KW-0573">Peptidoglycan synthesis</keyword>
<keyword id="KW-1185">Reference proteome</keyword>
<keyword id="KW-0808">Transferase</keyword>
<comment type="function">
    <text evidence="1">Cell wall formation. Catalyzes the transfer of a GlcNAc subunit on undecaprenyl-pyrophosphoryl-MurNAc-pentapeptide (lipid intermediate I) to form undecaprenyl-pyrophosphoryl-MurNAc-(pentapeptide)GlcNAc (lipid intermediate II).</text>
</comment>
<comment type="catalytic activity">
    <reaction evidence="1">
        <text>di-trans,octa-cis-undecaprenyl diphospho-N-acetyl-alpha-D-muramoyl-L-alanyl-D-glutamyl-meso-2,6-diaminopimeloyl-D-alanyl-D-alanine + UDP-N-acetyl-alpha-D-glucosamine = di-trans,octa-cis-undecaprenyl diphospho-[N-acetyl-alpha-D-glucosaminyl-(1-&gt;4)]-N-acetyl-alpha-D-muramoyl-L-alanyl-D-glutamyl-meso-2,6-diaminopimeloyl-D-alanyl-D-alanine + UDP + H(+)</text>
        <dbReference type="Rhea" id="RHEA:31227"/>
        <dbReference type="ChEBI" id="CHEBI:15378"/>
        <dbReference type="ChEBI" id="CHEBI:57705"/>
        <dbReference type="ChEBI" id="CHEBI:58223"/>
        <dbReference type="ChEBI" id="CHEBI:61387"/>
        <dbReference type="ChEBI" id="CHEBI:61388"/>
        <dbReference type="EC" id="2.4.1.227"/>
    </reaction>
</comment>
<comment type="pathway">
    <text evidence="1">Cell wall biogenesis; peptidoglycan biosynthesis.</text>
</comment>
<comment type="subcellular location">
    <subcellularLocation>
        <location evidence="1">Cell inner membrane</location>
        <topology evidence="1">Peripheral membrane protein</topology>
        <orientation evidence="1">Cytoplasmic side</orientation>
    </subcellularLocation>
</comment>
<comment type="similarity">
    <text evidence="1">Belongs to the glycosyltransferase 28 family. MurG subfamily.</text>
</comment>
<sequence length="352" mass="38913">MPRLLIAASGTGGHIYPALSFADSLSNSWEIVWLGVPHRLEVELVPEKYNLIKLKVGGLQGNSFRKLFNLCKLLFASVQVSVLLRQKKINVIFTTGGYISAPSILGAKMAGIPVLLHESNAIPGKVTRLLGRFCDHVALGIPSASEYLQRCRTSFTGTPVRTEFLLEKSLPSWVPLGEGVLIVVMGGSQGAIKMNEMVRKILPCLIEKGCRVVHLTGKNDCFYRNRDQEKNHPNLVVRDFSDEIPALLRNADLAISRSGAGAICELMVTKTPSILIPFPSSTDQHQELNAAYMARFGGAIIVNQHDPEKNILKNIVSNLLDSNSLREMKLNMNNHDYSYPEKKIFEIIHSIS</sequence>
<accession>Q46HH6</accession>
<name>MURG_PROMT</name>
<reference key="1">
    <citation type="journal article" date="2007" name="PLoS Genet.">
        <title>Patterns and implications of gene gain and loss in the evolution of Prochlorococcus.</title>
        <authorList>
            <person name="Kettler G.C."/>
            <person name="Martiny A.C."/>
            <person name="Huang K."/>
            <person name="Zucker J."/>
            <person name="Coleman M.L."/>
            <person name="Rodrigue S."/>
            <person name="Chen F."/>
            <person name="Lapidus A."/>
            <person name="Ferriera S."/>
            <person name="Johnson J."/>
            <person name="Steglich C."/>
            <person name="Church G.M."/>
            <person name="Richardson P."/>
            <person name="Chisholm S.W."/>
        </authorList>
    </citation>
    <scope>NUCLEOTIDE SEQUENCE [LARGE SCALE GENOMIC DNA]</scope>
    <source>
        <strain>NATL2A</strain>
    </source>
</reference>
<proteinExistence type="inferred from homology"/>
<protein>
    <recommendedName>
        <fullName evidence="1">UDP-N-acetylglucosamine--N-acetylmuramyl-(pentapeptide) pyrophosphoryl-undecaprenol N-acetylglucosamine transferase</fullName>
        <ecNumber evidence="1">2.4.1.227</ecNumber>
    </recommendedName>
    <alternativeName>
        <fullName evidence="1">Undecaprenyl-PP-MurNAc-pentapeptide-UDPGlcNAc GlcNAc transferase</fullName>
    </alternativeName>
</protein>
<evidence type="ECO:0000255" key="1">
    <source>
        <dbReference type="HAMAP-Rule" id="MF_00033"/>
    </source>
</evidence>
<dbReference type="EC" id="2.4.1.227" evidence="1"/>
<dbReference type="EMBL" id="CP000095">
    <property type="protein sequence ID" value="AAZ59052.1"/>
    <property type="molecule type" value="Genomic_DNA"/>
</dbReference>
<dbReference type="RefSeq" id="WP_011294197.1">
    <property type="nucleotide sequence ID" value="NC_007335.2"/>
</dbReference>
<dbReference type="SMR" id="Q46HH6"/>
<dbReference type="STRING" id="59920.PMN2A_1564"/>
<dbReference type="CAZy" id="GT28">
    <property type="family name" value="Glycosyltransferase Family 28"/>
</dbReference>
<dbReference type="KEGG" id="pmn:PMN2A_1564"/>
<dbReference type="HOGENOM" id="CLU_037404_2_1_3"/>
<dbReference type="OrthoDB" id="9808936at2"/>
<dbReference type="PhylomeDB" id="Q46HH6"/>
<dbReference type="UniPathway" id="UPA00219"/>
<dbReference type="Proteomes" id="UP000002535">
    <property type="component" value="Chromosome"/>
</dbReference>
<dbReference type="GO" id="GO:0005886">
    <property type="term" value="C:plasma membrane"/>
    <property type="evidence" value="ECO:0007669"/>
    <property type="project" value="UniProtKB-SubCell"/>
</dbReference>
<dbReference type="GO" id="GO:0051991">
    <property type="term" value="F:UDP-N-acetyl-D-glucosamine:N-acetylmuramoyl-L-alanyl-D-glutamyl-meso-2,6-diaminopimelyl-D-alanyl-D-alanine-diphosphoundecaprenol 4-beta-N-acetylglucosaminlytransferase activity"/>
    <property type="evidence" value="ECO:0007669"/>
    <property type="project" value="RHEA"/>
</dbReference>
<dbReference type="GO" id="GO:0050511">
    <property type="term" value="F:undecaprenyldiphospho-muramoylpentapeptide beta-N-acetylglucosaminyltransferase activity"/>
    <property type="evidence" value="ECO:0007669"/>
    <property type="project" value="UniProtKB-UniRule"/>
</dbReference>
<dbReference type="GO" id="GO:0005975">
    <property type="term" value="P:carbohydrate metabolic process"/>
    <property type="evidence" value="ECO:0007669"/>
    <property type="project" value="InterPro"/>
</dbReference>
<dbReference type="GO" id="GO:0051301">
    <property type="term" value="P:cell division"/>
    <property type="evidence" value="ECO:0007669"/>
    <property type="project" value="UniProtKB-KW"/>
</dbReference>
<dbReference type="GO" id="GO:0071555">
    <property type="term" value="P:cell wall organization"/>
    <property type="evidence" value="ECO:0007669"/>
    <property type="project" value="UniProtKB-KW"/>
</dbReference>
<dbReference type="GO" id="GO:0030259">
    <property type="term" value="P:lipid glycosylation"/>
    <property type="evidence" value="ECO:0007669"/>
    <property type="project" value="UniProtKB-UniRule"/>
</dbReference>
<dbReference type="GO" id="GO:0009252">
    <property type="term" value="P:peptidoglycan biosynthetic process"/>
    <property type="evidence" value="ECO:0007669"/>
    <property type="project" value="UniProtKB-UniRule"/>
</dbReference>
<dbReference type="GO" id="GO:0008360">
    <property type="term" value="P:regulation of cell shape"/>
    <property type="evidence" value="ECO:0007669"/>
    <property type="project" value="UniProtKB-KW"/>
</dbReference>
<dbReference type="CDD" id="cd03785">
    <property type="entry name" value="GT28_MurG"/>
    <property type="match status" value="1"/>
</dbReference>
<dbReference type="Gene3D" id="3.40.50.2000">
    <property type="entry name" value="Glycogen Phosphorylase B"/>
    <property type="match status" value="2"/>
</dbReference>
<dbReference type="HAMAP" id="MF_00033">
    <property type="entry name" value="MurG"/>
    <property type="match status" value="1"/>
</dbReference>
<dbReference type="InterPro" id="IPR006009">
    <property type="entry name" value="GlcNAc_MurG"/>
</dbReference>
<dbReference type="InterPro" id="IPR007235">
    <property type="entry name" value="Glyco_trans_28_C"/>
</dbReference>
<dbReference type="InterPro" id="IPR004276">
    <property type="entry name" value="GlycoTrans_28_N"/>
</dbReference>
<dbReference type="NCBIfam" id="TIGR01133">
    <property type="entry name" value="murG"/>
    <property type="match status" value="1"/>
</dbReference>
<dbReference type="PANTHER" id="PTHR21015:SF22">
    <property type="entry name" value="GLYCOSYLTRANSFERASE"/>
    <property type="match status" value="1"/>
</dbReference>
<dbReference type="PANTHER" id="PTHR21015">
    <property type="entry name" value="UDP-N-ACETYLGLUCOSAMINE--N-ACETYLMURAMYL-(PENTAPEPTIDE) PYROPHOSPHORYL-UNDECAPRENOL N-ACETYLGLUCOSAMINE TRANSFERASE 1"/>
    <property type="match status" value="1"/>
</dbReference>
<dbReference type="Pfam" id="PF04101">
    <property type="entry name" value="Glyco_tran_28_C"/>
    <property type="match status" value="1"/>
</dbReference>
<dbReference type="Pfam" id="PF03033">
    <property type="entry name" value="Glyco_transf_28"/>
    <property type="match status" value="1"/>
</dbReference>
<dbReference type="SUPFAM" id="SSF53756">
    <property type="entry name" value="UDP-Glycosyltransferase/glycogen phosphorylase"/>
    <property type="match status" value="1"/>
</dbReference>
<organism>
    <name type="scientific">Prochlorococcus marinus (strain NATL2A)</name>
    <dbReference type="NCBI Taxonomy" id="59920"/>
    <lineage>
        <taxon>Bacteria</taxon>
        <taxon>Bacillati</taxon>
        <taxon>Cyanobacteriota</taxon>
        <taxon>Cyanophyceae</taxon>
        <taxon>Synechococcales</taxon>
        <taxon>Prochlorococcaceae</taxon>
        <taxon>Prochlorococcus</taxon>
    </lineage>
</organism>